<dbReference type="EMBL" id="BX571860">
    <property type="protein sequence ID" value="CAE12718.1"/>
    <property type="molecule type" value="Genomic_DNA"/>
</dbReference>
<dbReference type="RefSeq" id="WP_011144809.1">
    <property type="nucleotide sequence ID" value="NC_005126.1"/>
</dbReference>
<dbReference type="SMR" id="Q7N9C0"/>
<dbReference type="STRING" id="243265.plu0423"/>
<dbReference type="GeneID" id="48846709"/>
<dbReference type="KEGG" id="plu:plu0423"/>
<dbReference type="eggNOG" id="COG2900">
    <property type="taxonomic scope" value="Bacteria"/>
</dbReference>
<dbReference type="HOGENOM" id="CLU_180796_4_2_6"/>
<dbReference type="OrthoDB" id="5771733at2"/>
<dbReference type="Proteomes" id="UP000002514">
    <property type="component" value="Chromosome"/>
</dbReference>
<dbReference type="Gene3D" id="1.20.5.300">
    <property type="match status" value="1"/>
</dbReference>
<dbReference type="HAMAP" id="MF_00715">
    <property type="entry name" value="SlyX"/>
    <property type="match status" value="1"/>
</dbReference>
<dbReference type="InterPro" id="IPR007236">
    <property type="entry name" value="SlyX"/>
</dbReference>
<dbReference type="NCBIfam" id="NF002750">
    <property type="entry name" value="PRK02793.1"/>
    <property type="match status" value="1"/>
</dbReference>
<dbReference type="PANTHER" id="PTHR36508">
    <property type="entry name" value="PROTEIN SLYX"/>
    <property type="match status" value="1"/>
</dbReference>
<dbReference type="PANTHER" id="PTHR36508:SF1">
    <property type="entry name" value="PROTEIN SLYX"/>
    <property type="match status" value="1"/>
</dbReference>
<dbReference type="Pfam" id="PF04102">
    <property type="entry name" value="SlyX"/>
    <property type="match status" value="1"/>
</dbReference>
<organism>
    <name type="scientific">Photorhabdus laumondii subsp. laumondii (strain DSM 15139 / CIP 105565 / TT01)</name>
    <name type="common">Photorhabdus luminescens subsp. laumondii</name>
    <dbReference type="NCBI Taxonomy" id="243265"/>
    <lineage>
        <taxon>Bacteria</taxon>
        <taxon>Pseudomonadati</taxon>
        <taxon>Pseudomonadota</taxon>
        <taxon>Gammaproteobacteria</taxon>
        <taxon>Enterobacterales</taxon>
        <taxon>Morganellaceae</taxon>
        <taxon>Photorhabdus</taxon>
    </lineage>
</organism>
<sequence length="72" mass="8593">MDLSKFEQRLECLESRMAFQERTIEELNQVVTEQQMEITKLREHLRLMTERLKATQPSMIASQSEETPPPHY</sequence>
<reference key="1">
    <citation type="journal article" date="2003" name="Nat. Biotechnol.">
        <title>The genome sequence of the entomopathogenic bacterium Photorhabdus luminescens.</title>
        <authorList>
            <person name="Duchaud E."/>
            <person name="Rusniok C."/>
            <person name="Frangeul L."/>
            <person name="Buchrieser C."/>
            <person name="Givaudan A."/>
            <person name="Taourit S."/>
            <person name="Bocs S."/>
            <person name="Boursaux-Eude C."/>
            <person name="Chandler M."/>
            <person name="Charles J.-F."/>
            <person name="Dassa E."/>
            <person name="Derose R."/>
            <person name="Derzelle S."/>
            <person name="Freyssinet G."/>
            <person name="Gaudriault S."/>
            <person name="Medigue C."/>
            <person name="Lanois A."/>
            <person name="Powell K."/>
            <person name="Siguier P."/>
            <person name="Vincent R."/>
            <person name="Wingate V."/>
            <person name="Zouine M."/>
            <person name="Glaser P."/>
            <person name="Boemare N."/>
            <person name="Danchin A."/>
            <person name="Kunst F."/>
        </authorList>
    </citation>
    <scope>NUCLEOTIDE SEQUENCE [LARGE SCALE GENOMIC DNA]</scope>
    <source>
        <strain>DSM 15139 / CIP 105565 / TT01</strain>
    </source>
</reference>
<gene>
    <name evidence="1" type="primary">slyX</name>
    <name type="ordered locus">plu0423</name>
</gene>
<evidence type="ECO:0000255" key="1">
    <source>
        <dbReference type="HAMAP-Rule" id="MF_00715"/>
    </source>
</evidence>
<evidence type="ECO:0000256" key="2">
    <source>
        <dbReference type="SAM" id="MobiDB-lite"/>
    </source>
</evidence>
<protein>
    <recommendedName>
        <fullName evidence="1">Protein SlyX</fullName>
    </recommendedName>
</protein>
<name>SLYX_PHOLL</name>
<accession>Q7N9C0</accession>
<feature type="chain" id="PRO_0000227072" description="Protein SlyX">
    <location>
        <begin position="1"/>
        <end position="72"/>
    </location>
</feature>
<feature type="region of interest" description="Disordered" evidence="2">
    <location>
        <begin position="53"/>
        <end position="72"/>
    </location>
</feature>
<feature type="compositionally biased region" description="Polar residues" evidence="2">
    <location>
        <begin position="55"/>
        <end position="66"/>
    </location>
</feature>
<keyword id="KW-1185">Reference proteome</keyword>
<proteinExistence type="inferred from homology"/>
<comment type="similarity">
    <text evidence="1">Belongs to the SlyX family.</text>
</comment>